<accession>A0A0B4J1G0</accession>
<accession>Q3TC44</accession>
<accession>Q8R2R4</accession>
<accession>Q8R477</accession>
<gene>
    <name evidence="17 24" type="primary">Fcgr4</name>
    <name evidence="17" type="synonym">Fcgr3a</name>
</gene>
<sequence length="249" mass="28398">MWQLLLPTALVLTAFSGIQAGLQKAVVNLDPKWVRVLEEDSVTLRCQGTFSPEDNSIKWFHNESLIPHQDANYVIQSARVKDSGMYRCQTALSTISDPVQLEVHMGWLLLQTTKWLFQEGDPIHLRCHSWQNRPVRKVTYLQNGKGKKYFHENSELLIPKATHNDSGSYFCRGLIGHNNKSSASFRISLGDPGSPSMFPPWHQITFCLLIGLLFAIDTVLYFSVRRGLQSPVADYEEPKIQWSKEPQDK</sequence>
<name>FCG3A_MOUSE</name>
<organism evidence="25">
    <name type="scientific">Mus musculus</name>
    <name type="common">Mouse</name>
    <dbReference type="NCBI Taxonomy" id="10090"/>
    <lineage>
        <taxon>Eukaryota</taxon>
        <taxon>Metazoa</taxon>
        <taxon>Chordata</taxon>
        <taxon>Craniata</taxon>
        <taxon>Vertebrata</taxon>
        <taxon>Euteleostomi</taxon>
        <taxon>Mammalia</taxon>
        <taxon>Eutheria</taxon>
        <taxon>Euarchontoglires</taxon>
        <taxon>Glires</taxon>
        <taxon>Rodentia</taxon>
        <taxon>Myomorpha</taxon>
        <taxon>Muroidea</taxon>
        <taxon>Muridae</taxon>
        <taxon>Murinae</taxon>
        <taxon>Mus</taxon>
        <taxon>Mus</taxon>
    </lineage>
</organism>
<reference evidence="20" key="1">
    <citation type="journal article" date="2002" name="Immunogenetics">
        <title>Identification of CD16-2, a novel mouse receptor homologous to CD16/Fc gamma RIII.</title>
        <authorList>
            <person name="Mechetina L.V."/>
            <person name="Najakshin A.M."/>
            <person name="Alabyev B.Y."/>
            <person name="Chikaev N.A."/>
            <person name="Taranin A.V."/>
        </authorList>
    </citation>
    <scope>NUCLEOTIDE SEQUENCE [MRNA]</scope>
    <scope>TISSUE SPECIFICITY</scope>
    <source>
        <strain evidence="20">C57BL/6J</strain>
        <tissue evidence="20">Liver</tissue>
    </source>
</reference>
<reference evidence="21" key="2">
    <citation type="journal article" date="2008" name="J. Immunol.">
        <title>B lymphocyte depletion by CD20 monoclonal antibody prevents diabetes in nonobese diabetic mice despite isotype-specific differences in Fc gamma R effector functions.</title>
        <authorList>
            <person name="Xiu Y."/>
            <person name="Wong C.P."/>
            <person name="Bouaziz J.D."/>
            <person name="Hamaguchi Y."/>
            <person name="Wang Y."/>
            <person name="Pop S.M."/>
            <person name="Tisch R.M."/>
            <person name="Tedder T.F."/>
        </authorList>
    </citation>
    <scope>NUCLEOTIDE SEQUENCE [MRNA]</scope>
    <source>
        <strain evidence="21">NOD/LtJ</strain>
    </source>
</reference>
<reference evidence="22" key="3">
    <citation type="journal article" date="2005" name="Science">
        <title>The transcriptional landscape of the mammalian genome.</title>
        <authorList>
            <person name="Carninci P."/>
            <person name="Kasukawa T."/>
            <person name="Katayama S."/>
            <person name="Gough J."/>
            <person name="Frith M.C."/>
            <person name="Maeda N."/>
            <person name="Oyama R."/>
            <person name="Ravasi T."/>
            <person name="Lenhard B."/>
            <person name="Wells C."/>
            <person name="Kodzius R."/>
            <person name="Shimokawa K."/>
            <person name="Bajic V.B."/>
            <person name="Brenner S.E."/>
            <person name="Batalov S."/>
            <person name="Forrest A.R."/>
            <person name="Zavolan M."/>
            <person name="Davis M.J."/>
            <person name="Wilming L.G."/>
            <person name="Aidinis V."/>
            <person name="Allen J.E."/>
            <person name="Ambesi-Impiombato A."/>
            <person name="Apweiler R."/>
            <person name="Aturaliya R.N."/>
            <person name="Bailey T.L."/>
            <person name="Bansal M."/>
            <person name="Baxter L."/>
            <person name="Beisel K.W."/>
            <person name="Bersano T."/>
            <person name="Bono H."/>
            <person name="Chalk A.M."/>
            <person name="Chiu K.P."/>
            <person name="Choudhary V."/>
            <person name="Christoffels A."/>
            <person name="Clutterbuck D.R."/>
            <person name="Crowe M.L."/>
            <person name="Dalla E."/>
            <person name="Dalrymple B.P."/>
            <person name="de Bono B."/>
            <person name="Della Gatta G."/>
            <person name="di Bernardo D."/>
            <person name="Down T."/>
            <person name="Engstrom P."/>
            <person name="Fagiolini M."/>
            <person name="Faulkner G."/>
            <person name="Fletcher C.F."/>
            <person name="Fukushima T."/>
            <person name="Furuno M."/>
            <person name="Futaki S."/>
            <person name="Gariboldi M."/>
            <person name="Georgii-Hemming P."/>
            <person name="Gingeras T.R."/>
            <person name="Gojobori T."/>
            <person name="Green R.E."/>
            <person name="Gustincich S."/>
            <person name="Harbers M."/>
            <person name="Hayashi Y."/>
            <person name="Hensch T.K."/>
            <person name="Hirokawa N."/>
            <person name="Hill D."/>
            <person name="Huminiecki L."/>
            <person name="Iacono M."/>
            <person name="Ikeo K."/>
            <person name="Iwama A."/>
            <person name="Ishikawa T."/>
            <person name="Jakt M."/>
            <person name="Kanapin A."/>
            <person name="Katoh M."/>
            <person name="Kawasawa Y."/>
            <person name="Kelso J."/>
            <person name="Kitamura H."/>
            <person name="Kitano H."/>
            <person name="Kollias G."/>
            <person name="Krishnan S.P."/>
            <person name="Kruger A."/>
            <person name="Kummerfeld S.K."/>
            <person name="Kurochkin I.V."/>
            <person name="Lareau L.F."/>
            <person name="Lazarevic D."/>
            <person name="Lipovich L."/>
            <person name="Liu J."/>
            <person name="Liuni S."/>
            <person name="McWilliam S."/>
            <person name="Madan Babu M."/>
            <person name="Madera M."/>
            <person name="Marchionni L."/>
            <person name="Matsuda H."/>
            <person name="Matsuzawa S."/>
            <person name="Miki H."/>
            <person name="Mignone F."/>
            <person name="Miyake S."/>
            <person name="Morris K."/>
            <person name="Mottagui-Tabar S."/>
            <person name="Mulder N."/>
            <person name="Nakano N."/>
            <person name="Nakauchi H."/>
            <person name="Ng P."/>
            <person name="Nilsson R."/>
            <person name="Nishiguchi S."/>
            <person name="Nishikawa S."/>
            <person name="Nori F."/>
            <person name="Ohara O."/>
            <person name="Okazaki Y."/>
            <person name="Orlando V."/>
            <person name="Pang K.C."/>
            <person name="Pavan W.J."/>
            <person name="Pavesi G."/>
            <person name="Pesole G."/>
            <person name="Petrovsky N."/>
            <person name="Piazza S."/>
            <person name="Reed J."/>
            <person name="Reid J.F."/>
            <person name="Ring B.Z."/>
            <person name="Ringwald M."/>
            <person name="Rost B."/>
            <person name="Ruan Y."/>
            <person name="Salzberg S.L."/>
            <person name="Sandelin A."/>
            <person name="Schneider C."/>
            <person name="Schoenbach C."/>
            <person name="Sekiguchi K."/>
            <person name="Semple C.A."/>
            <person name="Seno S."/>
            <person name="Sessa L."/>
            <person name="Sheng Y."/>
            <person name="Shibata Y."/>
            <person name="Shimada H."/>
            <person name="Shimada K."/>
            <person name="Silva D."/>
            <person name="Sinclair B."/>
            <person name="Sperling S."/>
            <person name="Stupka E."/>
            <person name="Sugiura K."/>
            <person name="Sultana R."/>
            <person name="Takenaka Y."/>
            <person name="Taki K."/>
            <person name="Tammoja K."/>
            <person name="Tan S.L."/>
            <person name="Tang S."/>
            <person name="Taylor M.S."/>
            <person name="Tegner J."/>
            <person name="Teichmann S.A."/>
            <person name="Ueda H.R."/>
            <person name="van Nimwegen E."/>
            <person name="Verardo R."/>
            <person name="Wei C.L."/>
            <person name="Yagi K."/>
            <person name="Yamanishi H."/>
            <person name="Zabarovsky E."/>
            <person name="Zhu S."/>
            <person name="Zimmer A."/>
            <person name="Hide W."/>
            <person name="Bult C."/>
            <person name="Grimmond S.M."/>
            <person name="Teasdale R.D."/>
            <person name="Liu E.T."/>
            <person name="Brusic V."/>
            <person name="Quackenbush J."/>
            <person name="Wahlestedt C."/>
            <person name="Mattick J.S."/>
            <person name="Hume D.A."/>
            <person name="Kai C."/>
            <person name="Sasaki D."/>
            <person name="Tomaru Y."/>
            <person name="Fukuda S."/>
            <person name="Kanamori-Katayama M."/>
            <person name="Suzuki M."/>
            <person name="Aoki J."/>
            <person name="Arakawa T."/>
            <person name="Iida J."/>
            <person name="Imamura K."/>
            <person name="Itoh M."/>
            <person name="Kato T."/>
            <person name="Kawaji H."/>
            <person name="Kawagashira N."/>
            <person name="Kawashima T."/>
            <person name="Kojima M."/>
            <person name="Kondo S."/>
            <person name="Konno H."/>
            <person name="Nakano K."/>
            <person name="Ninomiya N."/>
            <person name="Nishio T."/>
            <person name="Okada M."/>
            <person name="Plessy C."/>
            <person name="Shibata K."/>
            <person name="Shiraki T."/>
            <person name="Suzuki S."/>
            <person name="Tagami M."/>
            <person name="Waki K."/>
            <person name="Watahiki A."/>
            <person name="Okamura-Oho Y."/>
            <person name="Suzuki H."/>
            <person name="Kawai J."/>
            <person name="Hayashizaki Y."/>
        </authorList>
    </citation>
    <scope>NUCLEOTIDE SEQUENCE [LARGE SCALE MRNA]</scope>
    <source>
        <strain evidence="22">NOD</strain>
        <tissue evidence="22">Dendritic cell</tissue>
    </source>
</reference>
<reference evidence="25" key="4">
    <citation type="journal article" date="2009" name="PLoS Biol.">
        <title>Lineage-specific biology revealed by a finished genome assembly of the mouse.</title>
        <authorList>
            <person name="Church D.M."/>
            <person name="Goodstadt L."/>
            <person name="Hillier L.W."/>
            <person name="Zody M.C."/>
            <person name="Goldstein S."/>
            <person name="She X."/>
            <person name="Bult C.J."/>
            <person name="Agarwala R."/>
            <person name="Cherry J.L."/>
            <person name="DiCuccio M."/>
            <person name="Hlavina W."/>
            <person name="Kapustin Y."/>
            <person name="Meric P."/>
            <person name="Maglott D."/>
            <person name="Birtle Z."/>
            <person name="Marques A.C."/>
            <person name="Graves T."/>
            <person name="Zhou S."/>
            <person name="Teague B."/>
            <person name="Potamousis K."/>
            <person name="Churas C."/>
            <person name="Place M."/>
            <person name="Herschleb J."/>
            <person name="Runnheim R."/>
            <person name="Forrest D."/>
            <person name="Amos-Landgraf J."/>
            <person name="Schwartz D.C."/>
            <person name="Cheng Z."/>
            <person name="Lindblad-Toh K."/>
            <person name="Eichler E.E."/>
            <person name="Ponting C.P."/>
        </authorList>
    </citation>
    <scope>NUCLEOTIDE SEQUENCE [LARGE SCALE GENOMIC DNA]</scope>
    <source>
        <strain evidence="25">C57BL/6J</strain>
    </source>
</reference>
<reference evidence="23" key="5">
    <citation type="submission" date="2005-09" db="EMBL/GenBank/DDBJ databases">
        <authorList>
            <person name="Mural R.J."/>
            <person name="Adams M.D."/>
            <person name="Myers E.W."/>
            <person name="Smith H.O."/>
            <person name="Venter J.C."/>
        </authorList>
    </citation>
    <scope>NUCLEOTIDE SEQUENCE [LARGE SCALE GENOMIC DNA]</scope>
</reference>
<reference evidence="19" key="6">
    <citation type="journal article" date="2004" name="Genome Res.">
        <title>The status, quality, and expansion of the NIH full-length cDNA project: the Mammalian Gene Collection (MGC).</title>
        <authorList>
            <consortium name="The MGC Project Team"/>
        </authorList>
    </citation>
    <scope>NUCLEOTIDE SEQUENCE [LARGE SCALE MRNA]</scope>
    <source>
        <strain evidence="19">Czech II</strain>
        <tissue evidence="19">Mammary tumor</tissue>
    </source>
</reference>
<reference key="7">
    <citation type="journal article" date="1994" name="Bull. World Health Organ.">
        <title>Nomenclature of Fc receptors. IUIS/WHO Subcommittee on Nomenclature of Fc receptors.</title>
        <authorList>
            <person name="Conrad D."/>
            <person name="Cooper M."/>
            <person name="Fridman W.H."/>
            <person name="Kinet J.P."/>
            <person name="Ravetch J."/>
        </authorList>
    </citation>
    <scope>NOMENCLATURE</scope>
</reference>
<reference evidence="18" key="8">
    <citation type="journal article" date="2005" name="Immunity">
        <title>FcgammaRIV: a novel FcR with distinct IgG subclass specificity.</title>
        <authorList>
            <person name="Nimmerjahn F."/>
            <person name="Bruhns P."/>
            <person name="Horiuchi K."/>
            <person name="Ravetch J.V."/>
        </authorList>
    </citation>
    <scope>FUNCTION</scope>
    <scope>INTERACTION WITH FCER1G</scope>
    <scope>SUBCELLULAR LOCATION</scope>
    <scope>TISSUE SPECIFICITY</scope>
    <scope>GLYCOSYLATION</scope>
</reference>
<reference evidence="18" key="9">
    <citation type="journal article" date="2007" name="Nat. Immunol.">
        <title>IgEb immune complexes activate macrophages through FcgammaRIV binding.</title>
        <authorList>
            <person name="Hirano M."/>
            <person name="Davis R.S."/>
            <person name="Fine W.D."/>
            <person name="Nakamura S."/>
            <person name="Shimizu K."/>
            <person name="Yagi H."/>
            <person name="Kato K."/>
            <person name="Stephan R.P."/>
            <person name="Cooper M.D."/>
        </authorList>
    </citation>
    <scope>FUNCTION</scope>
    <scope>INTERACTION WITH FCERG</scope>
    <scope>TISSUE SPECIFICITY</scope>
    <scope>INDUCTION</scope>
    <scope>PHOSPHORYLATION AT TYR-235</scope>
    <scope>MUTAGENESIS OF TYR-235</scope>
</reference>
<reference evidence="18" key="10">
    <citation type="journal article" date="2008" name="J. Clin. Invest.">
        <title>FcgammaRIV is a mouse IgE receptor that resembles macrophage FcepsilonRI in humans and promotes IgE-induced lung inflammation.</title>
        <authorList>
            <person name="Mancardi D.A."/>
            <person name="Iannascoli B."/>
            <person name="Hoos S."/>
            <person name="England P."/>
            <person name="Daeron M."/>
            <person name="Bruhns P."/>
        </authorList>
    </citation>
    <scope>FUNCTION</scope>
    <scope>GLYCOSYLATION</scope>
</reference>
<reference evidence="18" key="11">
    <citation type="journal article" date="2008" name="J. Immunol.">
        <title>Critical but overlapping role of FcgammaRIII and FcgammaRIV in activation of murine neutrophils by immobilized immune complexes.</title>
        <authorList>
            <person name="Jakus Z."/>
            <person name="Nemeth T."/>
            <person name="Verbeek J.S."/>
            <person name="Mocsai A."/>
        </authorList>
    </citation>
    <scope>FUNCTION</scope>
</reference>
<reference evidence="18" key="12">
    <citation type="journal article" date="2009" name="Eur. J. Immunol.">
        <title>Both FcgammaRIV and FcgammaRIII are essential receptors mediating type II and type III autoimmune responses via FcRgamma-LAT-dependent generation of C5a.</title>
        <authorList>
            <person name="Syed S.N."/>
            <person name="Konrad S."/>
            <person name="Wiege K."/>
            <person name="Nieswandt B."/>
            <person name="Nimmerjahn F."/>
            <person name="Schmidt R.E."/>
            <person name="Gessner J.E."/>
        </authorList>
    </citation>
    <scope>FUNCTION</scope>
    <scope>TISSUE SPECIFICITY</scope>
</reference>
<reference key="13">
    <citation type="journal article" date="2009" name="Immunity">
        <title>The phagosomal proteome in interferon-gamma-activated macrophages.</title>
        <authorList>
            <person name="Trost M."/>
            <person name="English L."/>
            <person name="Lemieux S."/>
            <person name="Courcelles M."/>
            <person name="Desjardins M."/>
            <person name="Thibault P."/>
        </authorList>
    </citation>
    <scope>PHOSPHORYLATION [LARGE SCALE ANALYSIS] AT TYR-235</scope>
    <scope>IDENTIFICATION BY MASS SPECTROMETRY [LARGE SCALE ANALYSIS]</scope>
</reference>
<reference key="14">
    <citation type="journal article" date="2014" name="Nat. Med.">
        <title>Broadly neutralizing hemagglutinin stalk-specific antibodies require FcgammaR interactions for protection against influenza virus in vivo.</title>
        <authorList>
            <person name="DiLillo D.J."/>
            <person name="Tan G.S."/>
            <person name="Palese P."/>
            <person name="Ravetch J.V."/>
        </authorList>
    </citation>
    <scope>FUNCTION</scope>
</reference>
<reference evidence="18" key="15">
    <citation type="journal article" date="2015" name="Nat. Commun.">
        <title>Immune complexes regulate bone metabolism through FcRgamma signalling.</title>
        <authorList>
            <person name="Negishi-Koga T."/>
            <person name="Gober H.J."/>
            <person name="Sumiya E."/>
            <person name="Komatsu N."/>
            <person name="Okamoto K."/>
            <person name="Sawa S."/>
            <person name="Suematsu A."/>
            <person name="Suda T."/>
            <person name="Sato K."/>
            <person name="Takai T."/>
            <person name="Takayanagi H."/>
        </authorList>
    </citation>
    <scope>FUNCTION</scope>
</reference>
<reference key="16">
    <citation type="journal article" date="2017" name="J. Exp. Med.">
        <title>DC subset-specific induction of T cell responses upon antigen uptake via Fcgamma receptors in vivo.</title>
        <authorList>
            <person name="Lehmann C.H.K."/>
            <person name="Baranska A."/>
            <person name="Heidkamp G.F."/>
            <person name="Heger L."/>
            <person name="Neubert K."/>
            <person name="Luehr J.J."/>
            <person name="Hoffmann A."/>
            <person name="Reimer K.C."/>
            <person name="Brueckner C."/>
            <person name="Beck S."/>
            <person name="Seeling M."/>
            <person name="Kiessling M."/>
            <person name="Soulat D."/>
            <person name="Krug A.B."/>
            <person name="Ravetch J.V."/>
            <person name="Leusen J.H.W."/>
            <person name="Nimmerjahn F."/>
            <person name="Dudziak D."/>
        </authorList>
    </citation>
    <scope>FUNCTION</scope>
    <scope>SUBCELLULAR LOCATION</scope>
    <scope>TISSUE SPECIFICITY</scope>
</reference>
<reference key="17">
    <citation type="journal article" date="2021" name="Antib Ther">
        <title>Cross-species higher sensitivities of FcgammaRIIIA/FcgammaRIV to afucosylated IgG for enhanced ADCC.</title>
        <authorList>
            <person name="Mao C."/>
            <person name="Near R."/>
            <person name="Zhong X."/>
            <person name="Gao W."/>
        </authorList>
    </citation>
    <scope>FUNCTION</scope>
</reference>
<proteinExistence type="evidence at protein level"/>
<dbReference type="EMBL" id="AF499613">
    <property type="protein sequence ID" value="AAM19249.1"/>
    <property type="molecule type" value="mRNA"/>
</dbReference>
<dbReference type="EMBL" id="EU050648">
    <property type="protein sequence ID" value="ABS89131.1"/>
    <property type="molecule type" value="mRNA"/>
</dbReference>
<dbReference type="EMBL" id="AK170920">
    <property type="protein sequence ID" value="BAE42113.1"/>
    <property type="molecule type" value="mRNA"/>
</dbReference>
<dbReference type="EMBL" id="AC115959">
    <property type="status" value="NOT_ANNOTATED_CDS"/>
    <property type="molecule type" value="Genomic_DNA"/>
</dbReference>
<dbReference type="EMBL" id="CH466520">
    <property type="protein sequence ID" value="EDL39140.1"/>
    <property type="molecule type" value="Genomic_DNA"/>
</dbReference>
<dbReference type="EMBL" id="BC027310">
    <property type="protein sequence ID" value="AAH27310.1"/>
    <property type="molecule type" value="mRNA"/>
</dbReference>
<dbReference type="CCDS" id="CCDS15476.1"/>
<dbReference type="RefSeq" id="NP_653142.2">
    <property type="nucleotide sequence ID" value="NM_144559.2"/>
</dbReference>
<dbReference type="SMR" id="A0A0B4J1G0"/>
<dbReference type="FunCoup" id="A0A0B4J1G0">
    <property type="interactions" value="486"/>
</dbReference>
<dbReference type="STRING" id="10090.ENSMUSP00000077873"/>
<dbReference type="GlyCosmos" id="A0A0B4J1G0">
    <property type="glycosylation" value="3 sites, No reported glycans"/>
</dbReference>
<dbReference type="GlyGen" id="A0A0B4J1G0">
    <property type="glycosylation" value="3 sites, 1 N-linked glycan (1 site)"/>
</dbReference>
<dbReference type="iPTMnet" id="A0A0B4J1G0"/>
<dbReference type="PhosphoSitePlus" id="A0A0B4J1G0"/>
<dbReference type="PaxDb" id="10090-ENSMUSP00000077873"/>
<dbReference type="ProteomicsDB" id="271732"/>
<dbReference type="DNASU" id="246256"/>
<dbReference type="Ensembl" id="ENSMUST00000078825.5">
    <property type="protein sequence ID" value="ENSMUSP00000077873.5"/>
    <property type="gene ID" value="ENSMUSG00000059089.5"/>
</dbReference>
<dbReference type="GeneID" id="246256"/>
<dbReference type="KEGG" id="mmu:246256"/>
<dbReference type="UCSC" id="uc007dmw.2">
    <property type="organism name" value="mouse"/>
</dbReference>
<dbReference type="AGR" id="MGI:2179523"/>
<dbReference type="CTD" id="246256"/>
<dbReference type="MGI" id="MGI:2179523">
    <property type="gene designation" value="Fcgr4"/>
</dbReference>
<dbReference type="VEuPathDB" id="HostDB:ENSMUSG00000059089"/>
<dbReference type="eggNOG" id="ENOG502RU1M">
    <property type="taxonomic scope" value="Eukaryota"/>
</dbReference>
<dbReference type="GeneTree" id="ENSGT01050000244808"/>
<dbReference type="HOGENOM" id="CLU_023383_1_0_1"/>
<dbReference type="InParanoid" id="A0A0B4J1G0"/>
<dbReference type="OMA" id="GDNSTQW"/>
<dbReference type="OrthoDB" id="8917564at2759"/>
<dbReference type="PhylomeDB" id="A0A0B4J1G0"/>
<dbReference type="Reactome" id="R-MMU-163125">
    <property type="pathway name" value="Post-translational modification: synthesis of GPI-anchored proteins"/>
</dbReference>
<dbReference type="Reactome" id="R-MMU-198933">
    <property type="pathway name" value="Immunoregulatory interactions between a Lymphoid and a non-Lymphoid cell"/>
</dbReference>
<dbReference type="Reactome" id="R-MMU-2029481">
    <property type="pathway name" value="FCGR activation"/>
</dbReference>
<dbReference type="Reactome" id="R-MMU-2029482">
    <property type="pathway name" value="Regulation of actin dynamics for phagocytic cup formation"/>
</dbReference>
<dbReference type="Reactome" id="R-MMU-2029485">
    <property type="pathway name" value="Role of phospholipids in phagocytosis"/>
</dbReference>
<dbReference type="Reactome" id="R-MMU-6798695">
    <property type="pathway name" value="Neutrophil degranulation"/>
</dbReference>
<dbReference type="BioGRID-ORCS" id="246256">
    <property type="hits" value="1 hit in 80 CRISPR screens"/>
</dbReference>
<dbReference type="PRO" id="PR:A0A0B4J1G0"/>
<dbReference type="Proteomes" id="UP000000589">
    <property type="component" value="Chromosome 1"/>
</dbReference>
<dbReference type="RNAct" id="A0A0B4J1G0">
    <property type="molecule type" value="protein"/>
</dbReference>
<dbReference type="Bgee" id="ENSMUSG00000059089">
    <property type="expression patterns" value="Expressed in granulocyte and 36 other cell types or tissues"/>
</dbReference>
<dbReference type="GO" id="GO:0009986">
    <property type="term" value="C:cell surface"/>
    <property type="evidence" value="ECO:0000314"/>
    <property type="project" value="UniProtKB"/>
</dbReference>
<dbReference type="GO" id="GO:0005886">
    <property type="term" value="C:plasma membrane"/>
    <property type="evidence" value="ECO:0000314"/>
    <property type="project" value="UniProtKB"/>
</dbReference>
<dbReference type="GO" id="GO:0019863">
    <property type="term" value="F:IgE binding"/>
    <property type="evidence" value="ECO:0007669"/>
    <property type="project" value="UniProtKB-KW"/>
</dbReference>
<dbReference type="GO" id="GO:0019767">
    <property type="term" value="F:IgE receptor activity"/>
    <property type="evidence" value="ECO:0000314"/>
    <property type="project" value="UniProtKB"/>
</dbReference>
<dbReference type="GO" id="GO:0019864">
    <property type="term" value="F:IgG binding"/>
    <property type="evidence" value="ECO:0007669"/>
    <property type="project" value="UniProtKB-KW"/>
</dbReference>
<dbReference type="GO" id="GO:0019770">
    <property type="term" value="F:IgG receptor activity"/>
    <property type="evidence" value="ECO:0000314"/>
    <property type="project" value="UniProtKB"/>
</dbReference>
<dbReference type="GO" id="GO:0140375">
    <property type="term" value="F:immune receptor activity"/>
    <property type="evidence" value="ECO:0000250"/>
    <property type="project" value="MGI"/>
</dbReference>
<dbReference type="GO" id="GO:0002468">
    <property type="term" value="P:dendritic cell antigen processing and presentation"/>
    <property type="evidence" value="ECO:0000315"/>
    <property type="project" value="UniProtKB"/>
</dbReference>
<dbReference type="GO" id="GO:0160006">
    <property type="term" value="P:Fc receptor-mediated immune complex endocytosis"/>
    <property type="evidence" value="ECO:0000314"/>
    <property type="project" value="UniProtKB"/>
</dbReference>
<dbReference type="GO" id="GO:0043320">
    <property type="term" value="P:natural killer cell degranulation"/>
    <property type="evidence" value="ECO:0000250"/>
    <property type="project" value="UniProt"/>
</dbReference>
<dbReference type="GO" id="GO:0042119">
    <property type="term" value="P:neutrophil activation"/>
    <property type="evidence" value="ECO:0000315"/>
    <property type="project" value="UniProtKB"/>
</dbReference>
<dbReference type="GO" id="GO:0045780">
    <property type="term" value="P:positive regulation of bone resorption"/>
    <property type="evidence" value="ECO:0000315"/>
    <property type="project" value="UniProtKB"/>
</dbReference>
<dbReference type="CDD" id="cd05752">
    <property type="entry name" value="Ig1_FcgammaR_like"/>
    <property type="match status" value="1"/>
</dbReference>
<dbReference type="CDD" id="cd05753">
    <property type="entry name" value="Ig2_FcgammaR_like"/>
    <property type="match status" value="1"/>
</dbReference>
<dbReference type="FunFam" id="2.60.40.10:FF:000217">
    <property type="entry name" value="High affinity immunoglobulin gamma Fc receptor I"/>
    <property type="match status" value="1"/>
</dbReference>
<dbReference type="FunFam" id="2.60.40.10:FF:000356">
    <property type="entry name" value="Low affinity immunoglobulin gamma Fc region receptor III-A"/>
    <property type="match status" value="1"/>
</dbReference>
<dbReference type="Gene3D" id="2.60.40.10">
    <property type="entry name" value="Immunoglobulins"/>
    <property type="match status" value="2"/>
</dbReference>
<dbReference type="InterPro" id="IPR007110">
    <property type="entry name" value="Ig-like_dom"/>
</dbReference>
<dbReference type="InterPro" id="IPR036179">
    <property type="entry name" value="Ig-like_dom_sf"/>
</dbReference>
<dbReference type="InterPro" id="IPR013783">
    <property type="entry name" value="Ig-like_fold"/>
</dbReference>
<dbReference type="InterPro" id="IPR050488">
    <property type="entry name" value="Ig_Fc_receptor"/>
</dbReference>
<dbReference type="InterPro" id="IPR003599">
    <property type="entry name" value="Ig_sub"/>
</dbReference>
<dbReference type="InterPro" id="IPR003598">
    <property type="entry name" value="Ig_sub2"/>
</dbReference>
<dbReference type="PANTHER" id="PTHR11481">
    <property type="entry name" value="IMMUNOGLOBULIN FC RECEPTOR"/>
    <property type="match status" value="1"/>
</dbReference>
<dbReference type="PANTHER" id="PTHR11481:SF103">
    <property type="entry name" value="LOW AFFINITY IMMUNOGLOBULIN GAMMA FC REGION RECEPTOR III-A-RELATED"/>
    <property type="match status" value="1"/>
</dbReference>
<dbReference type="Pfam" id="PF13895">
    <property type="entry name" value="Ig_2"/>
    <property type="match status" value="1"/>
</dbReference>
<dbReference type="Pfam" id="PF13927">
    <property type="entry name" value="Ig_3"/>
    <property type="match status" value="1"/>
</dbReference>
<dbReference type="SMART" id="SM00409">
    <property type="entry name" value="IG"/>
    <property type="match status" value="2"/>
</dbReference>
<dbReference type="SMART" id="SM00408">
    <property type="entry name" value="IGc2"/>
    <property type="match status" value="2"/>
</dbReference>
<dbReference type="SUPFAM" id="SSF48726">
    <property type="entry name" value="Immunoglobulin"/>
    <property type="match status" value="2"/>
</dbReference>
<dbReference type="PROSITE" id="PS50835">
    <property type="entry name" value="IG_LIKE"/>
    <property type="match status" value="2"/>
</dbReference>
<feature type="signal peptide" evidence="2">
    <location>
        <begin position="1"/>
        <end position="20"/>
    </location>
</feature>
<feature type="chain" id="PRO_5008204824" description="Low affinity immunoglobulin gamma Fc region receptor III-A" evidence="2">
    <location>
        <begin position="21"/>
        <end position="249"/>
    </location>
</feature>
<feature type="topological domain" description="Extracellular" evidence="18">
    <location>
        <begin position="21"/>
        <end position="203"/>
    </location>
</feature>
<feature type="transmembrane region" description="Helical" evidence="2">
    <location>
        <begin position="204"/>
        <end position="224"/>
    </location>
</feature>
<feature type="topological domain" description="Cytoplasmic" evidence="18">
    <location>
        <begin position="225"/>
        <end position="249"/>
    </location>
</feature>
<feature type="domain" description="Ig-like C2-type 1" evidence="3">
    <location>
        <begin position="22"/>
        <end position="102"/>
    </location>
</feature>
<feature type="domain" description="Ig-like C2-type 2" evidence="3">
    <location>
        <begin position="119"/>
        <end position="188"/>
    </location>
</feature>
<feature type="site" description="Important for receptor turnover" evidence="1">
    <location>
        <position position="217"/>
    </location>
</feature>
<feature type="modified residue" description="Phosphotyrosine" evidence="7 26">
    <location>
        <position position="235"/>
    </location>
</feature>
<feature type="glycosylation site" description="N-linked (GlcNAc...) asparagine" evidence="4">
    <location>
        <position position="62"/>
    </location>
</feature>
<feature type="glycosylation site" description="N-linked (GlcNAc...) asparagine" evidence="4">
    <location>
        <position position="164"/>
    </location>
</feature>
<feature type="glycosylation site" description="N-linked (GlcNAc...) asparagine" evidence="4">
    <location>
        <position position="179"/>
    </location>
</feature>
<feature type="disulfide bond" evidence="3">
    <location>
        <begin position="46"/>
        <end position="88"/>
    </location>
</feature>
<feature type="disulfide bond" evidence="3">
    <location>
        <begin position="127"/>
        <end position="171"/>
    </location>
</feature>
<feature type="mutagenesis site" description="Abolishes receptor ligation-induced phosphorylation." evidence="7">
    <original>Y</original>
    <variation>W</variation>
    <location>
        <position position="235"/>
    </location>
</feature>
<feature type="sequence conflict" description="In Ref. 2; ABS89131 and 3; BAE42113." evidence="18" ref="2 3">
    <original>I</original>
    <variation>T</variation>
    <location>
        <position position="57"/>
    </location>
</feature>
<feature type="sequence conflict" description="In Ref. 6; AAH27310." evidence="18" ref="6">
    <original>L</original>
    <variation>S</variation>
    <location>
        <position position="141"/>
    </location>
</feature>
<feature type="sequence conflict" description="In Ref. 1; AAM19249." evidence="18" ref="1">
    <original>L</original>
    <variation>P</variation>
    <location>
        <position position="157"/>
    </location>
</feature>
<evidence type="ECO:0000250" key="1">
    <source>
        <dbReference type="UniProtKB" id="P08637"/>
    </source>
</evidence>
<evidence type="ECO:0000255" key="2"/>
<evidence type="ECO:0000255" key="3">
    <source>
        <dbReference type="PROSITE-ProRule" id="PRU00114"/>
    </source>
</evidence>
<evidence type="ECO:0000255" key="4">
    <source>
        <dbReference type="PROSITE-ProRule" id="PRU00498"/>
    </source>
</evidence>
<evidence type="ECO:0000269" key="5">
    <source>
    </source>
</evidence>
<evidence type="ECO:0000269" key="6">
    <source>
    </source>
</evidence>
<evidence type="ECO:0000269" key="7">
    <source>
    </source>
</evidence>
<evidence type="ECO:0000269" key="8">
    <source>
    </source>
</evidence>
<evidence type="ECO:0000269" key="9">
    <source>
    </source>
</evidence>
<evidence type="ECO:0000269" key="10">
    <source>
    </source>
</evidence>
<evidence type="ECO:0000269" key="11">
    <source>
    </source>
</evidence>
<evidence type="ECO:0000269" key="12">
    <source>
    </source>
</evidence>
<evidence type="ECO:0000269" key="13">
    <source>
    </source>
</evidence>
<evidence type="ECO:0000269" key="14">
    <source>
    </source>
</evidence>
<evidence type="ECO:0000303" key="15">
    <source>
    </source>
</evidence>
<evidence type="ECO:0000303" key="16">
    <source>
    </source>
</evidence>
<evidence type="ECO:0000303" key="17">
    <source>
    </source>
</evidence>
<evidence type="ECO:0000305" key="18"/>
<evidence type="ECO:0000312" key="19">
    <source>
        <dbReference type="EMBL" id="AAH27310.1"/>
    </source>
</evidence>
<evidence type="ECO:0000312" key="20">
    <source>
        <dbReference type="EMBL" id="AAM19249.1"/>
    </source>
</evidence>
<evidence type="ECO:0000312" key="21">
    <source>
        <dbReference type="EMBL" id="ABS89131.1"/>
    </source>
</evidence>
<evidence type="ECO:0000312" key="22">
    <source>
        <dbReference type="EMBL" id="BAE42113.1"/>
    </source>
</evidence>
<evidence type="ECO:0000312" key="23">
    <source>
        <dbReference type="EMBL" id="EDL39140.1"/>
    </source>
</evidence>
<evidence type="ECO:0000312" key="24">
    <source>
        <dbReference type="MGI" id="MGI:2179523"/>
    </source>
</evidence>
<evidence type="ECO:0000312" key="25">
    <source>
        <dbReference type="Proteomes" id="UP000000589"/>
    </source>
</evidence>
<evidence type="ECO:0007744" key="26">
    <source>
    </source>
</evidence>
<protein>
    <recommendedName>
        <fullName evidence="1">Low affinity immunoglobulin gamma Fc region receptor III-A</fullName>
        <shortName>IgG Fc receptor III-A</shortName>
    </recommendedName>
    <alternativeName>
        <fullName evidence="15">CD16-2</fullName>
    </alternativeName>
    <alternativeName>
        <fullName evidence="16">FcgammaRIV</fullName>
    </alternativeName>
    <cdAntigenName>CD16a</cdAntigenName>
</protein>
<comment type="function">
    <text evidence="6 7 8 9 10 11 12 13 14">Receptor for the invariable Fc fragment of immunoglobulin gamma (IgG) (PubMed:16039578). Binds with intermediate affinity to both IgG2a and IgG2b (PubMed:16039578, PubMed:17558411, PubMed:19795417). Can bind to IgG2a and IgG2b monomers (PubMed:18949059). Does not display binding to IgG1 or IgG3 (PubMed:16039578). Recognizes neutralizing virus-specific IgGs displayed on the cell surface of infected cells and triggers antibody-dependent cellular cytotoxicity (ADCC). Confers protection to lethal influenza virus infection (PubMed:24412922). On splenic dendritic cells, uptakes antigen immune complexes and efficiently divert them into MHC class I and II antigen presentation pathways to provide for superior priming of CD4-positive and CD8-positive T cell immune responses (PubMed:28389502). Mediates neutrophil activation by IgG complexes redundantly with FCGR2A (PubMed:18097064). Plays a role in promoting bone resorption by enhancing osteoclast differentiation following binding to IgG2a (PubMed:25824719). Also acts as a receptor for the Fc region of immunoglobulin epsilon (IgE) (PubMed:17558411, PubMed:18949059). Binds with low affinity to both the a and b allotypes of IgE (PubMed:18949059). Has also been shown to bind to IgE allotype a only but not to allotype b (PubMed:17558411). Binds aggregated IgE but not the monomeric form and bound monomeric IgG is readily displaced by IgE complexes (PubMed:18949059). Binding to IgE promotes macrophage-mediated phagocytosis, antigen presentation to T cells, production of pro-inflammatory cytokines and the late phase of cutaneous allergic reactions (PubMed:17558411, PubMed:18949059). Mediates enhanced ADCC in response to afucosylated IgGs (PubMed:34485821).</text>
</comment>
<comment type="subunit">
    <text evidence="6 7">Forms a heterooligomeric complex with ITAM-containing signaling subunits FCER1G. Interacts (via transmembrane domain) with signaling subunits; this interaction is a prerequisite for receptor complex expression on the cell surface and intracellular signal transduction. Binds the Fc region of antigen-complexed IgG.</text>
</comment>
<comment type="subcellular location">
    <subcellularLocation>
        <location evidence="6 7 13">Cell membrane</location>
        <topology evidence="2">Single-pass type I membrane protein</topology>
    </subcellularLocation>
</comment>
<comment type="tissue specificity">
    <text evidence="5 6 7 10 13">Detected on myeloid cells, peripheral blood monocytes, splenic and bone marrow dendritic cells, and thioglycollate-elicited macrophages and neutrophils but absent from lymphoid populations with no expression observed on T cells, B cells, NK cells or other granulocytes (at protein level) (PubMed:16039578, PubMed:19795417). Expressed in peripheral blood leukocytes, spleen, liver, thymus and small intestine (PubMed:12389094, PubMed:17558411). Expressed in splenic dendritic cell subsets (at protein level).</text>
</comment>
<comment type="induction">
    <text evidence="7">By lipopolysaccharide, interferon beta and IFNG.</text>
</comment>
<comment type="PTM">
    <text evidence="6 9">N-glycosylated.</text>
</comment>
<comment type="PTM">
    <text evidence="7">Phosphorylated following receptor ligation.</text>
</comment>
<keyword id="KW-1003">Cell membrane</keyword>
<keyword id="KW-1015">Disulfide bond</keyword>
<keyword id="KW-0325">Glycoprotein</keyword>
<keyword id="KW-0389">IgE-binding protein</keyword>
<keyword id="KW-0390">IgG-binding protein</keyword>
<keyword id="KW-0391">Immunity</keyword>
<keyword id="KW-0393">Immunoglobulin domain</keyword>
<keyword id="KW-0472">Membrane</keyword>
<keyword id="KW-0597">Phosphoprotein</keyword>
<keyword id="KW-0675">Receptor</keyword>
<keyword id="KW-1185">Reference proteome</keyword>
<keyword id="KW-0677">Repeat</keyword>
<keyword id="KW-0732">Signal</keyword>
<keyword id="KW-0812">Transmembrane</keyword>
<keyword id="KW-1133">Transmembrane helix</keyword>